<name>CH602_MYCGI</name>
<proteinExistence type="inferred from homology"/>
<reference key="1">
    <citation type="submission" date="2007-04" db="EMBL/GenBank/DDBJ databases">
        <title>Complete sequence of chromosome of Mycobacterium gilvum PYR-GCK.</title>
        <authorList>
            <consortium name="US DOE Joint Genome Institute"/>
            <person name="Copeland A."/>
            <person name="Lucas S."/>
            <person name="Lapidus A."/>
            <person name="Barry K."/>
            <person name="Detter J.C."/>
            <person name="Glavina del Rio T."/>
            <person name="Hammon N."/>
            <person name="Israni S."/>
            <person name="Dalin E."/>
            <person name="Tice H."/>
            <person name="Pitluck S."/>
            <person name="Chain P."/>
            <person name="Malfatti S."/>
            <person name="Shin M."/>
            <person name="Vergez L."/>
            <person name="Schmutz J."/>
            <person name="Larimer F."/>
            <person name="Land M."/>
            <person name="Hauser L."/>
            <person name="Kyrpides N."/>
            <person name="Mikhailova N."/>
            <person name="Miller C."/>
            <person name="Richardson P."/>
        </authorList>
    </citation>
    <scope>NUCLEOTIDE SEQUENCE [LARGE SCALE GENOMIC DNA]</scope>
    <source>
        <strain>PYR-GCK</strain>
    </source>
</reference>
<accession>A4T2X3</accession>
<protein>
    <recommendedName>
        <fullName evidence="2">Chaperonin GroEL 2</fullName>
        <ecNumber evidence="2">5.6.1.7</ecNumber>
    </recommendedName>
    <alternativeName>
        <fullName evidence="2">60 kDa chaperonin 2</fullName>
    </alternativeName>
    <alternativeName>
        <fullName evidence="2">Chaperonin-60 2</fullName>
        <shortName evidence="2">Cpn60 2</shortName>
    </alternativeName>
</protein>
<feature type="chain" id="PRO_0000332016" description="Chaperonin GroEL 2">
    <location>
        <begin position="1"/>
        <end position="541"/>
    </location>
</feature>
<feature type="binding site" evidence="2">
    <location>
        <begin position="29"/>
        <end position="32"/>
    </location>
    <ligand>
        <name>ATP</name>
        <dbReference type="ChEBI" id="CHEBI:30616"/>
    </ligand>
</feature>
<feature type="binding site" evidence="2">
    <location>
        <begin position="86"/>
        <end position="90"/>
    </location>
    <ligand>
        <name>ATP</name>
        <dbReference type="ChEBI" id="CHEBI:30616"/>
    </ligand>
</feature>
<feature type="binding site" evidence="2">
    <location>
        <position position="413"/>
    </location>
    <ligand>
        <name>ATP</name>
        <dbReference type="ChEBI" id="CHEBI:30616"/>
    </ligand>
</feature>
<feature type="binding site" evidence="2">
    <location>
        <begin position="476"/>
        <end position="478"/>
    </location>
    <ligand>
        <name>ATP</name>
        <dbReference type="ChEBI" id="CHEBI:30616"/>
    </ligand>
</feature>
<feature type="binding site" evidence="2">
    <location>
        <position position="492"/>
    </location>
    <ligand>
        <name>ATP</name>
        <dbReference type="ChEBI" id="CHEBI:30616"/>
    </ligand>
</feature>
<evidence type="ECO:0000250" key="1">
    <source>
        <dbReference type="UniProtKB" id="P9WPE7"/>
    </source>
</evidence>
<evidence type="ECO:0000255" key="2">
    <source>
        <dbReference type="HAMAP-Rule" id="MF_00600"/>
    </source>
</evidence>
<organism>
    <name type="scientific">Mycolicibacterium gilvum (strain PYR-GCK)</name>
    <name type="common">Mycobacterium gilvum (strain PYR-GCK)</name>
    <dbReference type="NCBI Taxonomy" id="350054"/>
    <lineage>
        <taxon>Bacteria</taxon>
        <taxon>Bacillati</taxon>
        <taxon>Actinomycetota</taxon>
        <taxon>Actinomycetes</taxon>
        <taxon>Mycobacteriales</taxon>
        <taxon>Mycobacteriaceae</taxon>
        <taxon>Mycolicibacterium</taxon>
    </lineage>
</organism>
<sequence length="541" mass="56342">MAKTIAYDEEARRGLERGLNSLADAVKVTLGPKGRNVVLEKKWGAPTITNDGVSIAKEIELEDPYEKIGAELVKEVAKKTDDVAGDGTTTATVLAQALVREGLRNVAAGANPLGLKRGIEKAVEAVTQGLLKSAKEVETKEQIAATAAISAGDVQIGELIAEAMDKVGNEGVITVEESNTFGLQLELTEGMRFDKGYISGYFVTDAERQEAVLEDPYILLVSSKVSTVKDLLPLLEKVIQAGKPLLIIAEDVEGEALSTLVVNKIRGTFKSVAVKAPGFGDRRKAMLQDMAILTGGQVVSEEVGLSLETADVALLGTARKVVVTKDETTIVEGAGDSDAIAGRVAQIRAEIENSDSDYDREKLQERLAKLAGGVAVIKAGAATEVELKERKHRIEDAVRNAKAAVEEGIVAGGGVALLQSAPVLEDLGLSGDEATGANIVRVALSAPLKQIAFNGGLEPGVVAEKVSNLPAGHGLNAATGEYEDLLKAGVADPVKVTRSALQNAASIAALFLTTEAVVADKPEKAAAPAGDPTGGMGGMDF</sequence>
<gene>
    <name evidence="2" type="primary">groEL2</name>
    <name evidence="2" type="synonym">groL2</name>
    <name type="ordered locus">Mflv_0141</name>
</gene>
<dbReference type="EC" id="5.6.1.7" evidence="2"/>
<dbReference type="EMBL" id="CP000656">
    <property type="protein sequence ID" value="ABP42636.1"/>
    <property type="molecule type" value="Genomic_DNA"/>
</dbReference>
<dbReference type="SMR" id="A4T2X3"/>
<dbReference type="STRING" id="350054.Mflv_0141"/>
<dbReference type="KEGG" id="mgi:Mflv_0141"/>
<dbReference type="eggNOG" id="COG0459">
    <property type="taxonomic scope" value="Bacteria"/>
</dbReference>
<dbReference type="HOGENOM" id="CLU_016503_3_0_11"/>
<dbReference type="OrthoDB" id="9766614at2"/>
<dbReference type="GO" id="GO:0042603">
    <property type="term" value="C:capsule"/>
    <property type="evidence" value="ECO:0007669"/>
    <property type="project" value="UniProtKB-SubCell"/>
</dbReference>
<dbReference type="GO" id="GO:0009986">
    <property type="term" value="C:cell surface"/>
    <property type="evidence" value="ECO:0007669"/>
    <property type="project" value="UniProtKB-SubCell"/>
</dbReference>
<dbReference type="GO" id="GO:0005737">
    <property type="term" value="C:cytoplasm"/>
    <property type="evidence" value="ECO:0007669"/>
    <property type="project" value="UniProtKB-UniRule"/>
</dbReference>
<dbReference type="GO" id="GO:0005576">
    <property type="term" value="C:extracellular region"/>
    <property type="evidence" value="ECO:0007669"/>
    <property type="project" value="UniProtKB-KW"/>
</dbReference>
<dbReference type="GO" id="GO:0005524">
    <property type="term" value="F:ATP binding"/>
    <property type="evidence" value="ECO:0007669"/>
    <property type="project" value="UniProtKB-UniRule"/>
</dbReference>
<dbReference type="GO" id="GO:0140662">
    <property type="term" value="F:ATP-dependent protein folding chaperone"/>
    <property type="evidence" value="ECO:0007669"/>
    <property type="project" value="InterPro"/>
</dbReference>
<dbReference type="GO" id="GO:0016853">
    <property type="term" value="F:isomerase activity"/>
    <property type="evidence" value="ECO:0007669"/>
    <property type="project" value="UniProtKB-KW"/>
</dbReference>
<dbReference type="GO" id="GO:0051082">
    <property type="term" value="F:unfolded protein binding"/>
    <property type="evidence" value="ECO:0007669"/>
    <property type="project" value="UniProtKB-UniRule"/>
</dbReference>
<dbReference type="GO" id="GO:0042026">
    <property type="term" value="P:protein refolding"/>
    <property type="evidence" value="ECO:0007669"/>
    <property type="project" value="UniProtKB-UniRule"/>
</dbReference>
<dbReference type="CDD" id="cd03344">
    <property type="entry name" value="GroEL"/>
    <property type="match status" value="1"/>
</dbReference>
<dbReference type="FunFam" id="3.50.7.10:FF:000001">
    <property type="entry name" value="60 kDa chaperonin"/>
    <property type="match status" value="1"/>
</dbReference>
<dbReference type="Gene3D" id="3.50.7.10">
    <property type="entry name" value="GroEL"/>
    <property type="match status" value="1"/>
</dbReference>
<dbReference type="Gene3D" id="1.10.560.10">
    <property type="entry name" value="GroEL-like equatorial domain"/>
    <property type="match status" value="1"/>
</dbReference>
<dbReference type="Gene3D" id="3.30.260.10">
    <property type="entry name" value="TCP-1-like chaperonin intermediate domain"/>
    <property type="match status" value="1"/>
</dbReference>
<dbReference type="HAMAP" id="MF_00600">
    <property type="entry name" value="CH60"/>
    <property type="match status" value="1"/>
</dbReference>
<dbReference type="InterPro" id="IPR018370">
    <property type="entry name" value="Chaperonin_Cpn60_CS"/>
</dbReference>
<dbReference type="InterPro" id="IPR001844">
    <property type="entry name" value="Cpn60/GroEL"/>
</dbReference>
<dbReference type="InterPro" id="IPR002423">
    <property type="entry name" value="Cpn60/GroEL/TCP-1"/>
</dbReference>
<dbReference type="InterPro" id="IPR027409">
    <property type="entry name" value="GroEL-like_apical_dom_sf"/>
</dbReference>
<dbReference type="InterPro" id="IPR027413">
    <property type="entry name" value="GROEL-like_equatorial_sf"/>
</dbReference>
<dbReference type="InterPro" id="IPR027410">
    <property type="entry name" value="TCP-1-like_intermed_sf"/>
</dbReference>
<dbReference type="NCBIfam" id="TIGR02348">
    <property type="entry name" value="GroEL"/>
    <property type="match status" value="1"/>
</dbReference>
<dbReference type="NCBIfam" id="NF000592">
    <property type="entry name" value="PRK00013.1"/>
    <property type="match status" value="1"/>
</dbReference>
<dbReference type="NCBIfam" id="NF009487">
    <property type="entry name" value="PRK12849.1"/>
    <property type="match status" value="1"/>
</dbReference>
<dbReference type="NCBIfam" id="NF009488">
    <property type="entry name" value="PRK12850.1"/>
    <property type="match status" value="1"/>
</dbReference>
<dbReference type="NCBIfam" id="NF009489">
    <property type="entry name" value="PRK12851.1"/>
    <property type="match status" value="1"/>
</dbReference>
<dbReference type="PANTHER" id="PTHR45633">
    <property type="entry name" value="60 KDA HEAT SHOCK PROTEIN, MITOCHONDRIAL"/>
    <property type="match status" value="1"/>
</dbReference>
<dbReference type="Pfam" id="PF00118">
    <property type="entry name" value="Cpn60_TCP1"/>
    <property type="match status" value="1"/>
</dbReference>
<dbReference type="PRINTS" id="PR00298">
    <property type="entry name" value="CHAPERONIN60"/>
</dbReference>
<dbReference type="SUPFAM" id="SSF52029">
    <property type="entry name" value="GroEL apical domain-like"/>
    <property type="match status" value="1"/>
</dbReference>
<dbReference type="SUPFAM" id="SSF48592">
    <property type="entry name" value="GroEL equatorial domain-like"/>
    <property type="match status" value="1"/>
</dbReference>
<dbReference type="SUPFAM" id="SSF54849">
    <property type="entry name" value="GroEL-intermediate domain like"/>
    <property type="match status" value="1"/>
</dbReference>
<dbReference type="PROSITE" id="PS00296">
    <property type="entry name" value="CHAPERONINS_CPN60"/>
    <property type="match status" value="1"/>
</dbReference>
<comment type="function">
    <text evidence="2">Together with its co-chaperonin GroES, plays an essential role in assisting protein folding. The GroEL-GroES system forms a nano-cage that allows encapsulation of the non-native substrate proteins and provides a physical environment optimized to promote and accelerate protein folding.</text>
</comment>
<comment type="catalytic activity">
    <reaction evidence="2">
        <text>ATP + H2O + a folded polypeptide = ADP + phosphate + an unfolded polypeptide.</text>
        <dbReference type="EC" id="5.6.1.7"/>
    </reaction>
</comment>
<comment type="subunit">
    <text evidence="2">Forms a cylinder of 14 subunits composed of two heptameric rings stacked back-to-back. Interacts with the co-chaperonin GroES.</text>
</comment>
<comment type="subcellular location">
    <subcellularLocation>
        <location evidence="1">Secreted</location>
        <location evidence="1">Capsule</location>
    </subcellularLocation>
    <subcellularLocation>
        <location evidence="1">Cell surface</location>
    </subcellularLocation>
    <subcellularLocation>
        <location evidence="1">Secreted</location>
        <location evidence="1">Cell wall</location>
    </subcellularLocation>
</comment>
<comment type="similarity">
    <text evidence="2">Belongs to the chaperonin (HSP60) family.</text>
</comment>
<keyword id="KW-0067">ATP-binding</keyword>
<keyword id="KW-0134">Cell wall</keyword>
<keyword id="KW-0143">Chaperone</keyword>
<keyword id="KW-0413">Isomerase</keyword>
<keyword id="KW-0547">Nucleotide-binding</keyword>
<keyword id="KW-0964">Secreted</keyword>